<evidence type="ECO:0000305" key="1"/>
<accession>O49885</accession>
<keyword id="KW-0687">Ribonucleoprotein</keyword>
<keyword id="KW-0689">Ribosomal protein</keyword>
<organism>
    <name type="scientific">Lupinus luteus</name>
    <name type="common">European yellow lupine</name>
    <dbReference type="NCBI Taxonomy" id="3873"/>
    <lineage>
        <taxon>Eukaryota</taxon>
        <taxon>Viridiplantae</taxon>
        <taxon>Streptophyta</taxon>
        <taxon>Embryophyta</taxon>
        <taxon>Tracheophyta</taxon>
        <taxon>Spermatophyta</taxon>
        <taxon>Magnoliopsida</taxon>
        <taxon>eudicotyledons</taxon>
        <taxon>Gunneridae</taxon>
        <taxon>Pentapetalae</taxon>
        <taxon>rosids</taxon>
        <taxon>fabids</taxon>
        <taxon>Fabales</taxon>
        <taxon>Fabaceae</taxon>
        <taxon>Papilionoideae</taxon>
        <taxon>50 kb inversion clade</taxon>
        <taxon>genistoids sensu lato</taxon>
        <taxon>core genistoids</taxon>
        <taxon>Genisteae</taxon>
        <taxon>Lupinus</taxon>
    </lineage>
</organism>
<proteinExistence type="evidence at transcript level"/>
<feature type="chain" id="PRO_0000133784" description="Large ribosomal subunit protein uL13">
    <location>
        <begin position="1"/>
        <end position="205"/>
    </location>
</feature>
<comment type="similarity">
    <text evidence="1">Belongs to the universal ribosomal protein uL13 family.</text>
</comment>
<sequence length="205" mass="23511">MVSGSGIAAKRVVVDARHHMLGRLASIVAKELLNGQKVVIVRSEEICISGGLVRQKMKYLRFLRKRMNTKPSHGPIHCAPSKIFWRTVRGMIPHKTKRGEHALARLKVYEGIPPPFDKQKRLVVPDALKVLRLQKGHKYCLLGQLSSEVGWNYYDTIKELEKKRKERSQVVYERKKQLNKLRVKAEQVAQEKLGSQLDILAPVKY</sequence>
<reference key="1">
    <citation type="submission" date="1998-01" db="EMBL/GenBank/DDBJ databases">
        <authorList>
            <person name="Nuc K."/>
            <person name="Nuc P."/>
            <person name="Pawelkiewicz J."/>
            <person name="Slomski R."/>
        </authorList>
    </citation>
    <scope>NUCLEOTIDE SEQUENCE [MRNA]</scope>
    <source>
        <strain>cv. Ventus</strain>
        <tissue>Epicotyl</tissue>
    </source>
</reference>
<name>RL13A_LUPLU</name>
<protein>
    <recommendedName>
        <fullName evidence="1">Large ribosomal subunit protein uL13</fullName>
    </recommendedName>
    <alternativeName>
        <fullName>60S ribosomal protein L13a</fullName>
    </alternativeName>
</protein>
<gene>
    <name type="primary">RPL13A</name>
</gene>
<dbReference type="EMBL" id="AJ223363">
    <property type="protein sequence ID" value="CAA11283.1"/>
    <property type="molecule type" value="mRNA"/>
</dbReference>
<dbReference type="SMR" id="O49885"/>
<dbReference type="GO" id="GO:0022625">
    <property type="term" value="C:cytosolic large ribosomal subunit"/>
    <property type="evidence" value="ECO:0007669"/>
    <property type="project" value="TreeGrafter"/>
</dbReference>
<dbReference type="GO" id="GO:0003729">
    <property type="term" value="F:mRNA binding"/>
    <property type="evidence" value="ECO:0007669"/>
    <property type="project" value="TreeGrafter"/>
</dbReference>
<dbReference type="GO" id="GO:0003735">
    <property type="term" value="F:structural constituent of ribosome"/>
    <property type="evidence" value="ECO:0007669"/>
    <property type="project" value="InterPro"/>
</dbReference>
<dbReference type="GO" id="GO:0017148">
    <property type="term" value="P:negative regulation of translation"/>
    <property type="evidence" value="ECO:0007669"/>
    <property type="project" value="TreeGrafter"/>
</dbReference>
<dbReference type="GO" id="GO:0006412">
    <property type="term" value="P:translation"/>
    <property type="evidence" value="ECO:0007669"/>
    <property type="project" value="InterPro"/>
</dbReference>
<dbReference type="CDD" id="cd00392">
    <property type="entry name" value="Ribosomal_L13"/>
    <property type="match status" value="1"/>
</dbReference>
<dbReference type="FunFam" id="6.10.250.3250:FF:000001">
    <property type="entry name" value="60S ribosomal protein L13a"/>
    <property type="match status" value="1"/>
</dbReference>
<dbReference type="FunFam" id="3.90.1180.10:FF:000003">
    <property type="entry name" value="60S ribosomal protein L13a-4"/>
    <property type="match status" value="1"/>
</dbReference>
<dbReference type="Gene3D" id="6.10.250.3250">
    <property type="match status" value="1"/>
</dbReference>
<dbReference type="Gene3D" id="3.90.1180.10">
    <property type="entry name" value="Ribosomal protein L13"/>
    <property type="match status" value="1"/>
</dbReference>
<dbReference type="HAMAP" id="MF_01366">
    <property type="entry name" value="Ribosomal_uL13"/>
    <property type="match status" value="1"/>
</dbReference>
<dbReference type="InterPro" id="IPR005822">
    <property type="entry name" value="Ribosomal_uL13"/>
</dbReference>
<dbReference type="InterPro" id="IPR023563">
    <property type="entry name" value="Ribosomal_uL13_CS"/>
</dbReference>
<dbReference type="InterPro" id="IPR005755">
    <property type="entry name" value="Ribosomal_uL13_euk/arc"/>
</dbReference>
<dbReference type="InterPro" id="IPR036899">
    <property type="entry name" value="Ribosomal_uL13_sf"/>
</dbReference>
<dbReference type="NCBIfam" id="TIGR01077">
    <property type="entry name" value="L13_A_E"/>
    <property type="match status" value="1"/>
</dbReference>
<dbReference type="PANTHER" id="PTHR11545:SF18">
    <property type="entry name" value="60S RIBOSOMAL PROTEIN L13A-4"/>
    <property type="match status" value="1"/>
</dbReference>
<dbReference type="PANTHER" id="PTHR11545">
    <property type="entry name" value="RIBOSOMAL PROTEIN L13"/>
    <property type="match status" value="1"/>
</dbReference>
<dbReference type="Pfam" id="PF00572">
    <property type="entry name" value="Ribosomal_L13"/>
    <property type="match status" value="1"/>
</dbReference>
<dbReference type="SUPFAM" id="SSF52161">
    <property type="entry name" value="Ribosomal protein L13"/>
    <property type="match status" value="1"/>
</dbReference>
<dbReference type="PROSITE" id="PS00783">
    <property type="entry name" value="RIBOSOMAL_L13"/>
    <property type="match status" value="1"/>
</dbReference>